<comment type="function">
    <text evidence="1">Phosphorolytic 3'-5' exoribonuclease that plays an important role in tRNA 3'-end maturation. Removes nucleotide residues following the 3'-CCA terminus of tRNAs; can also add nucleotides to the ends of RNA molecules by using nucleoside diphosphates as substrates, but this may not be physiologically important. Probably plays a role in initiation of 16S rRNA degradation (leading to ribosome degradation) during starvation.</text>
</comment>
<comment type="catalytic activity">
    <reaction evidence="1">
        <text>tRNA(n+1) + phosphate = tRNA(n) + a ribonucleoside 5'-diphosphate</text>
        <dbReference type="Rhea" id="RHEA:10628"/>
        <dbReference type="Rhea" id="RHEA-COMP:17343"/>
        <dbReference type="Rhea" id="RHEA-COMP:17344"/>
        <dbReference type="ChEBI" id="CHEBI:43474"/>
        <dbReference type="ChEBI" id="CHEBI:57930"/>
        <dbReference type="ChEBI" id="CHEBI:173114"/>
        <dbReference type="EC" id="2.7.7.56"/>
    </reaction>
</comment>
<comment type="subunit">
    <text evidence="1">Homohexameric ring arranged as a trimer of dimers.</text>
</comment>
<comment type="similarity">
    <text evidence="1">Belongs to the RNase PH family.</text>
</comment>
<proteinExistence type="inferred from homology"/>
<protein>
    <recommendedName>
        <fullName evidence="1">Ribonuclease PH</fullName>
        <shortName evidence="1">RNase PH</shortName>
        <ecNumber evidence="1">2.7.7.56</ecNumber>
    </recommendedName>
    <alternativeName>
        <fullName evidence="1">tRNA nucleotidyltransferase</fullName>
    </alternativeName>
</protein>
<keyword id="KW-0548">Nucleotidyltransferase</keyword>
<keyword id="KW-0694">RNA-binding</keyword>
<keyword id="KW-0698">rRNA processing</keyword>
<keyword id="KW-0808">Transferase</keyword>
<keyword id="KW-0819">tRNA processing</keyword>
<keyword id="KW-0820">tRNA-binding</keyword>
<gene>
    <name evidence="1" type="primary">rph</name>
    <name type="ordered locus">BamMC406_0869</name>
</gene>
<accession>B1YUN3</accession>
<name>RNPH_BURA4</name>
<evidence type="ECO:0000255" key="1">
    <source>
        <dbReference type="HAMAP-Rule" id="MF_00564"/>
    </source>
</evidence>
<organism>
    <name type="scientific">Burkholderia ambifaria (strain MC40-6)</name>
    <dbReference type="NCBI Taxonomy" id="398577"/>
    <lineage>
        <taxon>Bacteria</taxon>
        <taxon>Pseudomonadati</taxon>
        <taxon>Pseudomonadota</taxon>
        <taxon>Betaproteobacteria</taxon>
        <taxon>Burkholderiales</taxon>
        <taxon>Burkholderiaceae</taxon>
        <taxon>Burkholderia</taxon>
        <taxon>Burkholderia cepacia complex</taxon>
    </lineage>
</organism>
<sequence length="246" mass="26309">MTSSLSRPSGRRADELRKVALTRHYTKHAEGSVLVEFGDTKVICTASVAERVPEFLRDRGQGWLTAEYGMLPRATHTRSDREAARGKQTGRTQEIQRLIGRALRAVFDLEALGPRTIHIDCDVIQADGGTRTASITGAFVAAHDAVSKLIAAGKLARSPITDHVAAISVGVYEGVPLLDLDYAEDSRCDTDMNVVMTGAGGFVEVQGTAEGVPFSRAEMNALLDLAQSGIGQLVQLQKDVLGAGHV</sequence>
<reference key="1">
    <citation type="submission" date="2008-04" db="EMBL/GenBank/DDBJ databases">
        <title>Complete sequence of chromosome 1 of Burkholderia ambifaria MC40-6.</title>
        <authorList>
            <person name="Copeland A."/>
            <person name="Lucas S."/>
            <person name="Lapidus A."/>
            <person name="Glavina del Rio T."/>
            <person name="Dalin E."/>
            <person name="Tice H."/>
            <person name="Pitluck S."/>
            <person name="Chain P."/>
            <person name="Malfatti S."/>
            <person name="Shin M."/>
            <person name="Vergez L."/>
            <person name="Lang D."/>
            <person name="Schmutz J."/>
            <person name="Larimer F."/>
            <person name="Land M."/>
            <person name="Hauser L."/>
            <person name="Kyrpides N."/>
            <person name="Lykidis A."/>
            <person name="Ramette A."/>
            <person name="Konstantinidis K."/>
            <person name="Tiedje J."/>
            <person name="Richardson P."/>
        </authorList>
    </citation>
    <scope>NUCLEOTIDE SEQUENCE [LARGE SCALE GENOMIC DNA]</scope>
    <source>
        <strain>MC40-6</strain>
    </source>
</reference>
<dbReference type="EC" id="2.7.7.56" evidence="1"/>
<dbReference type="EMBL" id="CP001025">
    <property type="protein sequence ID" value="ACB63360.1"/>
    <property type="molecule type" value="Genomic_DNA"/>
</dbReference>
<dbReference type="RefSeq" id="WP_006756186.1">
    <property type="nucleotide sequence ID" value="NC_010551.1"/>
</dbReference>
<dbReference type="SMR" id="B1YUN3"/>
<dbReference type="KEGG" id="bac:BamMC406_0869"/>
<dbReference type="HOGENOM" id="CLU_050858_0_0_4"/>
<dbReference type="OrthoDB" id="9802265at2"/>
<dbReference type="Proteomes" id="UP000001680">
    <property type="component" value="Chromosome 1"/>
</dbReference>
<dbReference type="GO" id="GO:0000175">
    <property type="term" value="F:3'-5'-RNA exonuclease activity"/>
    <property type="evidence" value="ECO:0007669"/>
    <property type="project" value="UniProtKB-UniRule"/>
</dbReference>
<dbReference type="GO" id="GO:0000049">
    <property type="term" value="F:tRNA binding"/>
    <property type="evidence" value="ECO:0007669"/>
    <property type="project" value="UniProtKB-UniRule"/>
</dbReference>
<dbReference type="GO" id="GO:0009022">
    <property type="term" value="F:tRNA nucleotidyltransferase activity"/>
    <property type="evidence" value="ECO:0007669"/>
    <property type="project" value="UniProtKB-UniRule"/>
</dbReference>
<dbReference type="GO" id="GO:0016075">
    <property type="term" value="P:rRNA catabolic process"/>
    <property type="evidence" value="ECO:0007669"/>
    <property type="project" value="UniProtKB-UniRule"/>
</dbReference>
<dbReference type="GO" id="GO:0006364">
    <property type="term" value="P:rRNA processing"/>
    <property type="evidence" value="ECO:0007669"/>
    <property type="project" value="UniProtKB-KW"/>
</dbReference>
<dbReference type="GO" id="GO:0008033">
    <property type="term" value="P:tRNA processing"/>
    <property type="evidence" value="ECO:0007669"/>
    <property type="project" value="UniProtKB-UniRule"/>
</dbReference>
<dbReference type="CDD" id="cd11362">
    <property type="entry name" value="RNase_PH_bact"/>
    <property type="match status" value="1"/>
</dbReference>
<dbReference type="FunFam" id="3.30.230.70:FF:000003">
    <property type="entry name" value="Ribonuclease PH"/>
    <property type="match status" value="1"/>
</dbReference>
<dbReference type="Gene3D" id="3.30.230.70">
    <property type="entry name" value="GHMP Kinase, N-terminal domain"/>
    <property type="match status" value="1"/>
</dbReference>
<dbReference type="HAMAP" id="MF_00564">
    <property type="entry name" value="RNase_PH"/>
    <property type="match status" value="1"/>
</dbReference>
<dbReference type="InterPro" id="IPR001247">
    <property type="entry name" value="ExoRNase_PH_dom1"/>
</dbReference>
<dbReference type="InterPro" id="IPR015847">
    <property type="entry name" value="ExoRNase_PH_dom2"/>
</dbReference>
<dbReference type="InterPro" id="IPR036345">
    <property type="entry name" value="ExoRNase_PH_dom2_sf"/>
</dbReference>
<dbReference type="InterPro" id="IPR027408">
    <property type="entry name" value="PNPase/RNase_PH_dom_sf"/>
</dbReference>
<dbReference type="InterPro" id="IPR020568">
    <property type="entry name" value="Ribosomal_Su5_D2-typ_SF"/>
</dbReference>
<dbReference type="InterPro" id="IPR050080">
    <property type="entry name" value="RNase_PH"/>
</dbReference>
<dbReference type="InterPro" id="IPR002381">
    <property type="entry name" value="RNase_PH_bac-type"/>
</dbReference>
<dbReference type="InterPro" id="IPR018336">
    <property type="entry name" value="RNase_PH_CS"/>
</dbReference>
<dbReference type="NCBIfam" id="TIGR01966">
    <property type="entry name" value="RNasePH"/>
    <property type="match status" value="1"/>
</dbReference>
<dbReference type="PANTHER" id="PTHR11953">
    <property type="entry name" value="EXOSOME COMPLEX COMPONENT"/>
    <property type="match status" value="1"/>
</dbReference>
<dbReference type="PANTHER" id="PTHR11953:SF0">
    <property type="entry name" value="EXOSOME COMPLEX COMPONENT RRP41"/>
    <property type="match status" value="1"/>
</dbReference>
<dbReference type="Pfam" id="PF01138">
    <property type="entry name" value="RNase_PH"/>
    <property type="match status" value="1"/>
</dbReference>
<dbReference type="Pfam" id="PF03725">
    <property type="entry name" value="RNase_PH_C"/>
    <property type="match status" value="1"/>
</dbReference>
<dbReference type="SUPFAM" id="SSF55666">
    <property type="entry name" value="Ribonuclease PH domain 2-like"/>
    <property type="match status" value="1"/>
</dbReference>
<dbReference type="SUPFAM" id="SSF54211">
    <property type="entry name" value="Ribosomal protein S5 domain 2-like"/>
    <property type="match status" value="1"/>
</dbReference>
<dbReference type="PROSITE" id="PS01277">
    <property type="entry name" value="RIBONUCLEASE_PH"/>
    <property type="match status" value="1"/>
</dbReference>
<feature type="chain" id="PRO_1000129325" description="Ribonuclease PH">
    <location>
        <begin position="1"/>
        <end position="246"/>
    </location>
</feature>
<feature type="binding site" evidence="1">
    <location>
        <position position="91"/>
    </location>
    <ligand>
        <name>phosphate</name>
        <dbReference type="ChEBI" id="CHEBI:43474"/>
        <note>substrate</note>
    </ligand>
</feature>
<feature type="binding site" evidence="1">
    <location>
        <begin position="129"/>
        <end position="131"/>
    </location>
    <ligand>
        <name>phosphate</name>
        <dbReference type="ChEBI" id="CHEBI:43474"/>
        <note>substrate</note>
    </ligand>
</feature>